<feature type="chain" id="PRO_0000305837" description="Bifunctional protein FolD">
    <location>
        <begin position="1"/>
        <end position="281"/>
    </location>
</feature>
<feature type="binding site" evidence="1">
    <location>
        <begin position="163"/>
        <end position="165"/>
    </location>
    <ligand>
        <name>NADP(+)</name>
        <dbReference type="ChEBI" id="CHEBI:58349"/>
    </ligand>
</feature>
<keyword id="KW-0028">Amino-acid biosynthesis</keyword>
<keyword id="KW-0368">Histidine biosynthesis</keyword>
<keyword id="KW-0378">Hydrolase</keyword>
<keyword id="KW-0486">Methionine biosynthesis</keyword>
<keyword id="KW-0511">Multifunctional enzyme</keyword>
<keyword id="KW-0521">NADP</keyword>
<keyword id="KW-0554">One-carbon metabolism</keyword>
<keyword id="KW-0560">Oxidoreductase</keyword>
<keyword id="KW-0658">Purine biosynthesis</keyword>
<keyword id="KW-1185">Reference proteome</keyword>
<comment type="function">
    <text evidence="1">Catalyzes the oxidation of 5,10-methylenetetrahydrofolate to 5,10-methenyltetrahydrofolate and then the hydrolysis of 5,10-methenyltetrahydrofolate to 10-formyltetrahydrofolate.</text>
</comment>
<comment type="catalytic activity">
    <reaction evidence="1">
        <text>(6R)-5,10-methylene-5,6,7,8-tetrahydrofolate + NADP(+) = (6R)-5,10-methenyltetrahydrofolate + NADPH</text>
        <dbReference type="Rhea" id="RHEA:22812"/>
        <dbReference type="ChEBI" id="CHEBI:15636"/>
        <dbReference type="ChEBI" id="CHEBI:57455"/>
        <dbReference type="ChEBI" id="CHEBI:57783"/>
        <dbReference type="ChEBI" id="CHEBI:58349"/>
        <dbReference type="EC" id="1.5.1.5"/>
    </reaction>
</comment>
<comment type="catalytic activity">
    <reaction evidence="1">
        <text>(6R)-5,10-methenyltetrahydrofolate + H2O = (6R)-10-formyltetrahydrofolate + H(+)</text>
        <dbReference type="Rhea" id="RHEA:23700"/>
        <dbReference type="ChEBI" id="CHEBI:15377"/>
        <dbReference type="ChEBI" id="CHEBI:15378"/>
        <dbReference type="ChEBI" id="CHEBI:57455"/>
        <dbReference type="ChEBI" id="CHEBI:195366"/>
        <dbReference type="EC" id="3.5.4.9"/>
    </reaction>
</comment>
<comment type="pathway">
    <text evidence="1">One-carbon metabolism; tetrahydrofolate interconversion.</text>
</comment>
<comment type="subunit">
    <text evidence="1">Homodimer.</text>
</comment>
<comment type="similarity">
    <text evidence="1">Belongs to the tetrahydrofolate dehydrogenase/cyclohydrolase family.</text>
</comment>
<accession>Q03YZ6</accession>
<protein>
    <recommendedName>
        <fullName evidence="1">Bifunctional protein FolD</fullName>
    </recommendedName>
    <domain>
        <recommendedName>
            <fullName evidence="1">Methylenetetrahydrofolate dehydrogenase</fullName>
            <ecNumber evidence="1">1.5.1.5</ecNumber>
        </recommendedName>
    </domain>
    <domain>
        <recommendedName>
            <fullName evidence="1">Methenyltetrahydrofolate cyclohydrolase</fullName>
            <ecNumber evidence="1">3.5.4.9</ecNumber>
        </recommendedName>
    </domain>
</protein>
<evidence type="ECO:0000255" key="1">
    <source>
        <dbReference type="HAMAP-Rule" id="MF_01576"/>
    </source>
</evidence>
<proteinExistence type="inferred from homology"/>
<reference key="1">
    <citation type="journal article" date="2006" name="Proc. Natl. Acad. Sci. U.S.A.">
        <title>Comparative genomics of the lactic acid bacteria.</title>
        <authorList>
            <person name="Makarova K.S."/>
            <person name="Slesarev A."/>
            <person name="Wolf Y.I."/>
            <person name="Sorokin A."/>
            <person name="Mirkin B."/>
            <person name="Koonin E.V."/>
            <person name="Pavlov A."/>
            <person name="Pavlova N."/>
            <person name="Karamychev V."/>
            <person name="Polouchine N."/>
            <person name="Shakhova V."/>
            <person name="Grigoriev I."/>
            <person name="Lou Y."/>
            <person name="Rohksar D."/>
            <person name="Lucas S."/>
            <person name="Huang K."/>
            <person name="Goodstein D.M."/>
            <person name="Hawkins T."/>
            <person name="Plengvidhya V."/>
            <person name="Welker D."/>
            <person name="Hughes J."/>
            <person name="Goh Y."/>
            <person name="Benson A."/>
            <person name="Baldwin K."/>
            <person name="Lee J.-H."/>
            <person name="Diaz-Muniz I."/>
            <person name="Dosti B."/>
            <person name="Smeianov V."/>
            <person name="Wechter W."/>
            <person name="Barabote R."/>
            <person name="Lorca G."/>
            <person name="Altermann E."/>
            <person name="Barrangou R."/>
            <person name="Ganesan B."/>
            <person name="Xie Y."/>
            <person name="Rawsthorne H."/>
            <person name="Tamir D."/>
            <person name="Parker C."/>
            <person name="Breidt F."/>
            <person name="Broadbent J.R."/>
            <person name="Hutkins R."/>
            <person name="O'Sullivan D."/>
            <person name="Steele J."/>
            <person name="Unlu G."/>
            <person name="Saier M.H. Jr."/>
            <person name="Klaenhammer T."/>
            <person name="Richardson P."/>
            <person name="Kozyavkin S."/>
            <person name="Weimer B.C."/>
            <person name="Mills D.A."/>
        </authorList>
    </citation>
    <scope>NUCLEOTIDE SEQUENCE [LARGE SCALE GENOMIC DNA]</scope>
    <source>
        <strain>ATCC 8293 / DSM 20343 / BCRC 11652 / CCM 1803 / JCM 6124 / NCDO 523 / NBRC 100496 / NCIMB 8023 / NCTC 12954 / NRRL B-1118 / 37Y</strain>
    </source>
</reference>
<gene>
    <name evidence="1" type="primary">folD</name>
    <name type="ordered locus">LEUM_0460</name>
</gene>
<name>FOLD_LEUMM</name>
<organism>
    <name type="scientific">Leuconostoc mesenteroides subsp. mesenteroides (strain ATCC 8293 / DSM 20343 / BCRC 11652 / CCM 1803 / JCM 6124 / NCDO 523 / NBRC 100496 / NCIMB 8023 / NCTC 12954 / NRRL B-1118 / 37Y)</name>
    <dbReference type="NCBI Taxonomy" id="203120"/>
    <lineage>
        <taxon>Bacteria</taxon>
        <taxon>Bacillati</taxon>
        <taxon>Bacillota</taxon>
        <taxon>Bacilli</taxon>
        <taxon>Lactobacillales</taxon>
        <taxon>Lactobacillaceae</taxon>
        <taxon>Leuconostoc</taxon>
    </lineage>
</organism>
<dbReference type="EC" id="1.5.1.5" evidence="1"/>
<dbReference type="EC" id="3.5.4.9" evidence="1"/>
<dbReference type="EMBL" id="CP000414">
    <property type="protein sequence ID" value="ABJ61576.1"/>
    <property type="molecule type" value="Genomic_DNA"/>
</dbReference>
<dbReference type="RefSeq" id="WP_004164635.1">
    <property type="nucleotide sequence ID" value="NC_008531.1"/>
</dbReference>
<dbReference type="SMR" id="Q03YZ6"/>
<dbReference type="EnsemblBacteria" id="ABJ61576">
    <property type="protein sequence ID" value="ABJ61576"/>
    <property type="gene ID" value="LEUM_0460"/>
</dbReference>
<dbReference type="GeneID" id="29577154"/>
<dbReference type="KEGG" id="lme:LEUM_0460"/>
<dbReference type="eggNOG" id="COG0190">
    <property type="taxonomic scope" value="Bacteria"/>
</dbReference>
<dbReference type="HOGENOM" id="CLU_034045_2_0_9"/>
<dbReference type="UniPathway" id="UPA00193"/>
<dbReference type="Proteomes" id="UP000000362">
    <property type="component" value="Chromosome"/>
</dbReference>
<dbReference type="GO" id="GO:0005829">
    <property type="term" value="C:cytosol"/>
    <property type="evidence" value="ECO:0007669"/>
    <property type="project" value="TreeGrafter"/>
</dbReference>
<dbReference type="GO" id="GO:0004477">
    <property type="term" value="F:methenyltetrahydrofolate cyclohydrolase activity"/>
    <property type="evidence" value="ECO:0007669"/>
    <property type="project" value="UniProtKB-UniRule"/>
</dbReference>
<dbReference type="GO" id="GO:0004488">
    <property type="term" value="F:methylenetetrahydrofolate dehydrogenase (NADP+) activity"/>
    <property type="evidence" value="ECO:0007669"/>
    <property type="project" value="UniProtKB-UniRule"/>
</dbReference>
<dbReference type="GO" id="GO:0000105">
    <property type="term" value="P:L-histidine biosynthetic process"/>
    <property type="evidence" value="ECO:0007669"/>
    <property type="project" value="UniProtKB-KW"/>
</dbReference>
<dbReference type="GO" id="GO:0009086">
    <property type="term" value="P:methionine biosynthetic process"/>
    <property type="evidence" value="ECO:0007669"/>
    <property type="project" value="UniProtKB-KW"/>
</dbReference>
<dbReference type="GO" id="GO:0006164">
    <property type="term" value="P:purine nucleotide biosynthetic process"/>
    <property type="evidence" value="ECO:0007669"/>
    <property type="project" value="UniProtKB-KW"/>
</dbReference>
<dbReference type="GO" id="GO:0035999">
    <property type="term" value="P:tetrahydrofolate interconversion"/>
    <property type="evidence" value="ECO:0007669"/>
    <property type="project" value="UniProtKB-UniRule"/>
</dbReference>
<dbReference type="CDD" id="cd01080">
    <property type="entry name" value="NAD_bind_m-THF_DH_Cyclohyd"/>
    <property type="match status" value="1"/>
</dbReference>
<dbReference type="FunFam" id="3.40.50.720:FF:000006">
    <property type="entry name" value="Bifunctional protein FolD"/>
    <property type="match status" value="1"/>
</dbReference>
<dbReference type="Gene3D" id="3.40.50.10860">
    <property type="entry name" value="Leucine Dehydrogenase, chain A, domain 1"/>
    <property type="match status" value="1"/>
</dbReference>
<dbReference type="Gene3D" id="3.40.50.720">
    <property type="entry name" value="NAD(P)-binding Rossmann-like Domain"/>
    <property type="match status" value="1"/>
</dbReference>
<dbReference type="HAMAP" id="MF_01576">
    <property type="entry name" value="THF_DHG_CYH"/>
    <property type="match status" value="1"/>
</dbReference>
<dbReference type="InterPro" id="IPR046346">
    <property type="entry name" value="Aminoacid_DH-like_N_sf"/>
</dbReference>
<dbReference type="InterPro" id="IPR036291">
    <property type="entry name" value="NAD(P)-bd_dom_sf"/>
</dbReference>
<dbReference type="InterPro" id="IPR000672">
    <property type="entry name" value="THF_DH/CycHdrlase"/>
</dbReference>
<dbReference type="InterPro" id="IPR020630">
    <property type="entry name" value="THF_DH/CycHdrlase_cat_dom"/>
</dbReference>
<dbReference type="InterPro" id="IPR020867">
    <property type="entry name" value="THF_DH/CycHdrlase_CS"/>
</dbReference>
<dbReference type="InterPro" id="IPR020631">
    <property type="entry name" value="THF_DH/CycHdrlase_NAD-bd_dom"/>
</dbReference>
<dbReference type="PANTHER" id="PTHR48099:SF5">
    <property type="entry name" value="C-1-TETRAHYDROFOLATE SYNTHASE, CYTOPLASMIC"/>
    <property type="match status" value="1"/>
</dbReference>
<dbReference type="PANTHER" id="PTHR48099">
    <property type="entry name" value="C-1-TETRAHYDROFOLATE SYNTHASE, CYTOPLASMIC-RELATED"/>
    <property type="match status" value="1"/>
</dbReference>
<dbReference type="Pfam" id="PF00763">
    <property type="entry name" value="THF_DHG_CYH"/>
    <property type="match status" value="1"/>
</dbReference>
<dbReference type="Pfam" id="PF02882">
    <property type="entry name" value="THF_DHG_CYH_C"/>
    <property type="match status" value="1"/>
</dbReference>
<dbReference type="PRINTS" id="PR00085">
    <property type="entry name" value="THFDHDRGNASE"/>
</dbReference>
<dbReference type="SUPFAM" id="SSF53223">
    <property type="entry name" value="Aminoacid dehydrogenase-like, N-terminal domain"/>
    <property type="match status" value="1"/>
</dbReference>
<dbReference type="SUPFAM" id="SSF51735">
    <property type="entry name" value="NAD(P)-binding Rossmann-fold domains"/>
    <property type="match status" value="1"/>
</dbReference>
<dbReference type="PROSITE" id="PS00767">
    <property type="entry name" value="THF_DHG_CYH_2"/>
    <property type="match status" value="1"/>
</dbReference>
<sequence length="281" mass="29645">MTEILDGKAVAKTINEQTKARVAKQKRPVTLAVIYDPSNDGSQLYVGMKSRQAAKLGIVTRDIPISTDATTESVIQLVEELNDDESITGILVQSPLAKGIKERQIFSAVAPHKDADGLGATVQGMLFGDSLENYTVAATPQGVMTLLAQYNISLKGKNAVVVGRSQLFGRPMFALLTNADATVTLAHRYTEPTTLKALLKNADIVVVGVGIPNFIQGEDLKKGATVIDVGMNVVDGKATGDVNFSSAQGIAGYITPVPGGVGPMTIATLLENTVTLAEQHQ</sequence>